<gene>
    <name evidence="1" type="primary">rhaT</name>
    <name type="ordered locus">YPK_3840</name>
</gene>
<organism>
    <name type="scientific">Yersinia pseudotuberculosis serotype O:3 (strain YPIII)</name>
    <dbReference type="NCBI Taxonomy" id="502800"/>
    <lineage>
        <taxon>Bacteria</taxon>
        <taxon>Pseudomonadati</taxon>
        <taxon>Pseudomonadota</taxon>
        <taxon>Gammaproteobacteria</taxon>
        <taxon>Enterobacterales</taxon>
        <taxon>Yersiniaceae</taxon>
        <taxon>Yersinia</taxon>
    </lineage>
</organism>
<comment type="function">
    <text evidence="1">Uptake of L-rhamnose across the cytoplasmic membrane with the concomitant transport of protons into the cell (symport system).</text>
</comment>
<comment type="catalytic activity">
    <reaction evidence="1">
        <text>L-rhamnopyranose(in) + H(+)(in) = L-rhamnopyranose(out) + H(+)(out)</text>
        <dbReference type="Rhea" id="RHEA:29947"/>
        <dbReference type="ChEBI" id="CHEBI:15378"/>
        <dbReference type="ChEBI" id="CHEBI:62346"/>
    </reaction>
    <physiologicalReaction direction="right-to-left" evidence="1">
        <dbReference type="Rhea" id="RHEA:29949"/>
    </physiologicalReaction>
</comment>
<comment type="subcellular location">
    <subcellularLocation>
        <location evidence="1">Cell inner membrane</location>
        <topology evidence="1">Multi-pass membrane protein</topology>
    </subcellularLocation>
</comment>
<comment type="similarity">
    <text evidence="1">Belongs to the L-rhamnose transporter (TC 2.A.7.6) family.</text>
</comment>
<dbReference type="EMBL" id="CP000950">
    <property type="protein sequence ID" value="ACA70105.1"/>
    <property type="molecule type" value="Genomic_DNA"/>
</dbReference>
<dbReference type="RefSeq" id="WP_002209111.1">
    <property type="nucleotide sequence ID" value="NZ_CP009792.1"/>
</dbReference>
<dbReference type="GeneID" id="57974271"/>
<dbReference type="KEGG" id="ypy:YPK_3840"/>
<dbReference type="PATRIC" id="fig|502800.11.peg.186"/>
<dbReference type="GO" id="GO:0005886">
    <property type="term" value="C:plasma membrane"/>
    <property type="evidence" value="ECO:0007669"/>
    <property type="project" value="UniProtKB-SubCell"/>
</dbReference>
<dbReference type="GO" id="GO:0015153">
    <property type="term" value="F:rhamnose transmembrane transporter activity"/>
    <property type="evidence" value="ECO:0007669"/>
    <property type="project" value="UniProtKB-UniRule"/>
</dbReference>
<dbReference type="GO" id="GO:0015293">
    <property type="term" value="F:symporter activity"/>
    <property type="evidence" value="ECO:0007669"/>
    <property type="project" value="UniProtKB-KW"/>
</dbReference>
<dbReference type="HAMAP" id="MF_01532">
    <property type="entry name" value="RhaT"/>
    <property type="match status" value="1"/>
</dbReference>
<dbReference type="InterPro" id="IPR004673">
    <property type="entry name" value="L-rhamnose-proton_sym_RhaT"/>
</dbReference>
<dbReference type="NCBIfam" id="NF010021">
    <property type="entry name" value="PRK13499.1-1"/>
    <property type="match status" value="1"/>
</dbReference>
<dbReference type="NCBIfam" id="NF010023">
    <property type="entry name" value="PRK13499.1-3"/>
    <property type="match status" value="1"/>
</dbReference>
<dbReference type="NCBIfam" id="TIGR00776">
    <property type="entry name" value="RhaT"/>
    <property type="match status" value="1"/>
</dbReference>
<dbReference type="Pfam" id="PF06379">
    <property type="entry name" value="RhaT"/>
    <property type="match status" value="1"/>
</dbReference>
<feature type="chain" id="PRO_1000146505" description="L-rhamnose-proton symporter">
    <location>
        <begin position="1"/>
        <end position="344"/>
    </location>
</feature>
<feature type="transmembrane region" description="Helical" evidence="1">
    <location>
        <begin position="4"/>
        <end position="24"/>
    </location>
</feature>
<feature type="transmembrane region" description="Helical" evidence="1">
    <location>
        <begin position="38"/>
        <end position="58"/>
    </location>
</feature>
<feature type="transmembrane region" description="Helical" evidence="1">
    <location>
        <begin position="68"/>
        <end position="88"/>
    </location>
</feature>
<feature type="transmembrane region" description="Helical" evidence="1">
    <location>
        <begin position="101"/>
        <end position="121"/>
    </location>
</feature>
<feature type="transmembrane region" description="Helical" evidence="1">
    <location>
        <begin position="137"/>
        <end position="157"/>
    </location>
</feature>
<feature type="transmembrane region" description="Helical" evidence="1">
    <location>
        <begin position="175"/>
        <end position="195"/>
    </location>
</feature>
<feature type="transmembrane region" description="Helical" evidence="1">
    <location>
        <begin position="207"/>
        <end position="227"/>
    </location>
</feature>
<feature type="transmembrane region" description="Helical" evidence="1">
    <location>
        <begin position="259"/>
        <end position="279"/>
    </location>
</feature>
<feature type="transmembrane region" description="Helical" evidence="1">
    <location>
        <begin position="290"/>
        <end position="310"/>
    </location>
</feature>
<feature type="transmembrane region" description="Helical" evidence="1">
    <location>
        <begin position="321"/>
        <end position="341"/>
    </location>
</feature>
<keyword id="KW-0997">Cell inner membrane</keyword>
<keyword id="KW-1003">Cell membrane</keyword>
<keyword id="KW-0472">Membrane</keyword>
<keyword id="KW-0762">Sugar transport</keyword>
<keyword id="KW-0769">Symport</keyword>
<keyword id="KW-0812">Transmembrane</keyword>
<keyword id="KW-1133">Transmembrane helix</keyword>
<keyword id="KW-0813">Transport</keyword>
<sequence>MNNAIILGIIWHLVGAASAACFYAPFKQVKKWSWETMWSIGGLVSWLILPWTVSYLLLPDFWQYYGSFSIATLLPVFLFGAMWGIGNINYGLTMRYLGMSMGIGIAIGITLIIGTLMTPILQGRFDVLLGTPGGRMTLLGVFVALIGVAIVSYAGLLKERAMGIQAEEFNLKKGLILAVMCGIFSAGMSFAMDAAKPMHEAASALGINSLYVALPSYVIIMGGGAIINLSYCFIRLATLKNLSVKADFSVAKPLLITNILFSALAGLMWYLQFFFYAWGHAKIPQQYDYMSWMLHMSFYVLCGGIVGLLLKEWKCSTKKPVAVLCIGCLVIILAANIVGLGMAA</sequence>
<accession>B1JNC3</accession>
<reference key="1">
    <citation type="submission" date="2008-02" db="EMBL/GenBank/DDBJ databases">
        <title>Complete sequence of Yersinia pseudotuberculosis YPIII.</title>
        <authorList>
            <consortium name="US DOE Joint Genome Institute"/>
            <person name="Copeland A."/>
            <person name="Lucas S."/>
            <person name="Lapidus A."/>
            <person name="Glavina del Rio T."/>
            <person name="Dalin E."/>
            <person name="Tice H."/>
            <person name="Bruce D."/>
            <person name="Goodwin L."/>
            <person name="Pitluck S."/>
            <person name="Munk A.C."/>
            <person name="Brettin T."/>
            <person name="Detter J.C."/>
            <person name="Han C."/>
            <person name="Tapia R."/>
            <person name="Schmutz J."/>
            <person name="Larimer F."/>
            <person name="Land M."/>
            <person name="Hauser L."/>
            <person name="Challacombe J.F."/>
            <person name="Green L."/>
            <person name="Lindler L.E."/>
            <person name="Nikolich M.P."/>
            <person name="Richardson P."/>
        </authorList>
    </citation>
    <scope>NUCLEOTIDE SEQUENCE [LARGE SCALE GENOMIC DNA]</scope>
    <source>
        <strain>YPIII</strain>
    </source>
</reference>
<name>RHAT_YERPY</name>
<evidence type="ECO:0000255" key="1">
    <source>
        <dbReference type="HAMAP-Rule" id="MF_01532"/>
    </source>
</evidence>
<proteinExistence type="inferred from homology"/>
<protein>
    <recommendedName>
        <fullName evidence="1">L-rhamnose-proton symporter</fullName>
    </recommendedName>
    <alternativeName>
        <fullName evidence="1">L-rhamnose-H(+) transport protein</fullName>
    </alternativeName>
</protein>